<accession>C1FZ15</accession>
<dbReference type="EMBL" id="KN275957">
    <property type="protein sequence ID" value="EEH44752.2"/>
    <property type="molecule type" value="Genomic_DNA"/>
</dbReference>
<dbReference type="RefSeq" id="XP_010756096.1">
    <property type="nucleotide sequence ID" value="XM_010757794.1"/>
</dbReference>
<dbReference type="SMR" id="C1FZ15"/>
<dbReference type="STRING" id="502780.C1FZ15"/>
<dbReference type="GeneID" id="22580780"/>
<dbReference type="KEGG" id="pbn:PADG_01041"/>
<dbReference type="VEuPathDB" id="FungiDB:PADG_01041"/>
<dbReference type="eggNOG" id="ENOG502S5IB">
    <property type="taxonomic scope" value="Eukaryota"/>
</dbReference>
<dbReference type="HOGENOM" id="CLU_016140_0_0_1"/>
<dbReference type="InParanoid" id="C1FZ15"/>
<dbReference type="OMA" id="CLSSWVP"/>
<dbReference type="OrthoDB" id="29144at33183"/>
<dbReference type="Proteomes" id="UP000001628">
    <property type="component" value="Unassembled WGS sequence"/>
</dbReference>
<dbReference type="GO" id="GO:0005743">
    <property type="term" value="C:mitochondrial inner membrane"/>
    <property type="evidence" value="ECO:0007669"/>
    <property type="project" value="UniProtKB-SubCell"/>
</dbReference>
<dbReference type="GO" id="GO:0140053">
    <property type="term" value="P:mitochondrial gene expression"/>
    <property type="evidence" value="ECO:0007669"/>
    <property type="project" value="InterPro"/>
</dbReference>
<dbReference type="GO" id="GO:0048255">
    <property type="term" value="P:mRNA stabilization"/>
    <property type="evidence" value="ECO:0007669"/>
    <property type="project" value="TreeGrafter"/>
</dbReference>
<dbReference type="FunFam" id="3.30.460.10:FF:000044">
    <property type="entry name" value="ATPase synthesis protein 25, mitochondrial"/>
    <property type="match status" value="1"/>
</dbReference>
<dbReference type="Gene3D" id="3.30.460.10">
    <property type="entry name" value="Beta Polymerase, domain 2"/>
    <property type="match status" value="1"/>
</dbReference>
<dbReference type="InterPro" id="IPR040152">
    <property type="entry name" value="Atp25"/>
</dbReference>
<dbReference type="InterPro" id="IPR043519">
    <property type="entry name" value="NT_sf"/>
</dbReference>
<dbReference type="PANTHER" id="PTHR28087">
    <property type="entry name" value="ATPASE SYNTHESIS PROTEIN 25, MITOCHONDRIAL"/>
    <property type="match status" value="1"/>
</dbReference>
<dbReference type="PANTHER" id="PTHR28087:SF1">
    <property type="entry name" value="ATPASE SYNTHESIS PROTEIN 25, MITOCHONDRIAL"/>
    <property type="match status" value="1"/>
</dbReference>
<evidence type="ECO:0000250" key="1"/>
<evidence type="ECO:0000255" key="2"/>
<evidence type="ECO:0000256" key="3">
    <source>
        <dbReference type="SAM" id="MobiDB-lite"/>
    </source>
</evidence>
<evidence type="ECO:0000305" key="4"/>
<feature type="transit peptide" description="Mitochondrion" evidence="2">
    <location>
        <begin position="1"/>
        <end position="29"/>
    </location>
</feature>
<feature type="chain" id="PRO_0000404479" description="ATPase synthesis protein 25, mitochondrial">
    <location>
        <begin position="30"/>
        <end position="731"/>
    </location>
</feature>
<feature type="region of interest" description="Disordered" evidence="3">
    <location>
        <begin position="68"/>
        <end position="93"/>
    </location>
</feature>
<feature type="compositionally biased region" description="Polar residues" evidence="3">
    <location>
        <begin position="76"/>
        <end position="90"/>
    </location>
</feature>
<protein>
    <recommendedName>
        <fullName>ATPase synthesis protein 25, mitochondrial</fullName>
    </recommendedName>
</protein>
<keyword id="KW-0472">Membrane</keyword>
<keyword id="KW-0496">Mitochondrion</keyword>
<keyword id="KW-0999">Mitochondrion inner membrane</keyword>
<keyword id="KW-1185">Reference proteome</keyword>
<keyword id="KW-0809">Transit peptide</keyword>
<name>ATP25_PARBD</name>
<comment type="function">
    <text evidence="1">Probable mitochondrial mRNA stabilization factor.</text>
</comment>
<comment type="subcellular location">
    <subcellularLocation>
        <location evidence="1">Mitochondrion inner membrane</location>
        <topology evidence="1">Peripheral membrane protein</topology>
        <orientation evidence="1">Matrix side</orientation>
    </subcellularLocation>
</comment>
<comment type="similarity">
    <text evidence="4">Belongs to the ATP25 family.</text>
</comment>
<reference key="1">
    <citation type="journal article" date="2011" name="PLoS Genet.">
        <title>Comparative genomic analysis of human fungal pathogens causing paracoccidioidomycosis.</title>
        <authorList>
            <person name="Desjardins C.A."/>
            <person name="Champion M.D."/>
            <person name="Holder J.W."/>
            <person name="Muszewska A."/>
            <person name="Goldberg J."/>
            <person name="Bailao A.M."/>
            <person name="Brigido M.M."/>
            <person name="Ferreira M.E."/>
            <person name="Garcia A.M."/>
            <person name="Grynberg M."/>
            <person name="Gujja S."/>
            <person name="Heiman D.I."/>
            <person name="Henn M.R."/>
            <person name="Kodira C.D."/>
            <person name="Leon-Narvaez H."/>
            <person name="Longo L.V.G."/>
            <person name="Ma L.-J."/>
            <person name="Malavazi I."/>
            <person name="Matsuo A.L."/>
            <person name="Morais F.V."/>
            <person name="Pereira M."/>
            <person name="Rodriguez-Brito S."/>
            <person name="Sakthikumar S."/>
            <person name="Salem-Izacc S.M."/>
            <person name="Sykes S.M."/>
            <person name="Teixeira M.M."/>
            <person name="Vallejo M.C."/>
            <person name="Walter M.E."/>
            <person name="Yandava C."/>
            <person name="Young S."/>
            <person name="Zeng Q."/>
            <person name="Zucker J."/>
            <person name="Felipe M.S."/>
            <person name="Goldman G.H."/>
            <person name="Haas B.J."/>
            <person name="McEwen J.G."/>
            <person name="Nino-Vega G."/>
            <person name="Puccia R."/>
            <person name="San-Blas G."/>
            <person name="Soares C.M."/>
            <person name="Birren B.W."/>
            <person name="Cuomo C.A."/>
        </authorList>
    </citation>
    <scope>NUCLEOTIDE SEQUENCE [LARGE SCALE GENOMIC DNA]</scope>
    <source>
        <strain>Pb18</strain>
    </source>
</reference>
<gene>
    <name type="primary">ATP25</name>
    <name type="ORF">PADG_01041</name>
</gene>
<proteinExistence type="inferred from homology"/>
<organism>
    <name type="scientific">Paracoccidioides brasiliensis (strain Pb18)</name>
    <dbReference type="NCBI Taxonomy" id="502780"/>
    <lineage>
        <taxon>Eukaryota</taxon>
        <taxon>Fungi</taxon>
        <taxon>Dikarya</taxon>
        <taxon>Ascomycota</taxon>
        <taxon>Pezizomycotina</taxon>
        <taxon>Eurotiomycetes</taxon>
        <taxon>Eurotiomycetidae</taxon>
        <taxon>Onygenales</taxon>
        <taxon>Ajellomycetaceae</taxon>
        <taxon>Paracoccidioides</taxon>
    </lineage>
</organism>
<sequence length="731" mass="81800">MSRVLLRGIQCHACRQNVIRSFVSASGVTITPPAIGSVSPSKAHPPHLSGSFPTRHVKLFSSQAKDDPSLAADAVSENSAAQEGSYPQENSEQHVPWYLQEEVQEMALHPMRQQQELPPLPENPPPILKVLLEYISVDIGLDNLNLLDLRTLDPPPALGANLIMIFGTARSVKHLNVSADKFCRWLRTTYKLRPDADGLLGRNELKIKLRRKARRARLIKRAGSTLKQPDDGITTGWICVDVGIVEGGQLSKPEGVQKAGFVGFGTVIQGTRIVVQMMTEEKREEIDLESLWRQTLEKNSMDNPGLPKPQAEEPPQVVGFTHESSTVTAADFSHRVSQTPPIRANYEQLRSISTSLHRLRDKRGSATDFVPTDTTVATKSAKSTSSQESLPSLFNYLSNLEPDKAIDELGQGMDDRTSTSFLQRFYEELARTAPQIASAQKLELMCTAILLQHSGYRKEDLFQAFKEHIVSNYPLPRALVLRILDALLAFKPDPNSNPPRLRLPGADMELALRLIENAALRGTNILHADFLIRVFLAVSYRTRVYAVKPGNLHSAAITGNRIPVSIDEFESVQRIQTRLASIIRAAKVALGEKEYLDILRVHSDQGEYAKFWNAWGEVALAGIHRGKSFYLFLFNLHAELGDWQQSRTTLLNCIPMMWREDPPVFFDAELAEVVSKCIALAYPDIDDTVQHNLPALIVKTWHHCRTAIQNQKMNERKERLIQTELGTLPEN</sequence>